<proteinExistence type="inferred from homology"/>
<feature type="chain" id="PRO_1000213499" description="Ribosome maturation factor RimP">
    <location>
        <begin position="1"/>
        <end position="152"/>
    </location>
</feature>
<keyword id="KW-0963">Cytoplasm</keyword>
<keyword id="KW-1185">Reference proteome</keyword>
<keyword id="KW-0690">Ribosome biogenesis</keyword>
<sequence length="152" mass="17261">MAGKHTQLEELIAPVVESLECELWGLEYSVQGRRSMLRIFIDKQPDGVLVEDCEKVSRQVSSVLDVEDPISGEYTLEVSSPGMDRPLFKLAHFELYVGHRVALRLRVAFEGRRKFQGLLKGIEDGEIVLEVGEEEYLLPFELIDKANVVPQF</sequence>
<reference key="1">
    <citation type="journal article" date="2009" name="PLoS ONE">
        <title>The complete genome of Teredinibacter turnerae T7901: an intracellular endosymbiont of marine wood-boring bivalves (shipworms).</title>
        <authorList>
            <person name="Yang J.C."/>
            <person name="Madupu R."/>
            <person name="Durkin A.S."/>
            <person name="Ekborg N.A."/>
            <person name="Pedamallu C.S."/>
            <person name="Hostetler J.B."/>
            <person name="Radune D."/>
            <person name="Toms B.S."/>
            <person name="Henrissat B."/>
            <person name="Coutinho P.M."/>
            <person name="Schwarz S."/>
            <person name="Field L."/>
            <person name="Trindade-Silva A.E."/>
            <person name="Soares C.A.G."/>
            <person name="Elshahawi S."/>
            <person name="Hanora A."/>
            <person name="Schmidt E.W."/>
            <person name="Haygood M.G."/>
            <person name="Posfai J."/>
            <person name="Benner J."/>
            <person name="Madinger C."/>
            <person name="Nove J."/>
            <person name="Anton B."/>
            <person name="Chaudhary K."/>
            <person name="Foster J."/>
            <person name="Holman A."/>
            <person name="Kumar S."/>
            <person name="Lessard P.A."/>
            <person name="Luyten Y.A."/>
            <person name="Slatko B."/>
            <person name="Wood N."/>
            <person name="Wu B."/>
            <person name="Teplitski M."/>
            <person name="Mougous J.D."/>
            <person name="Ward N."/>
            <person name="Eisen J.A."/>
            <person name="Badger J.H."/>
            <person name="Distel D.L."/>
        </authorList>
    </citation>
    <scope>NUCLEOTIDE SEQUENCE [LARGE SCALE GENOMIC DNA]</scope>
    <source>
        <strain>ATCC 39867 / T7901</strain>
    </source>
</reference>
<evidence type="ECO:0000255" key="1">
    <source>
        <dbReference type="HAMAP-Rule" id="MF_01077"/>
    </source>
</evidence>
<gene>
    <name evidence="1" type="primary">rimP</name>
    <name type="ordered locus">TERTU_3219</name>
</gene>
<name>RIMP_TERTT</name>
<organism>
    <name type="scientific">Teredinibacter turnerae (strain ATCC 39867 / T7901)</name>
    <dbReference type="NCBI Taxonomy" id="377629"/>
    <lineage>
        <taxon>Bacteria</taxon>
        <taxon>Pseudomonadati</taxon>
        <taxon>Pseudomonadota</taxon>
        <taxon>Gammaproteobacteria</taxon>
        <taxon>Cellvibrionales</taxon>
        <taxon>Cellvibrionaceae</taxon>
        <taxon>Teredinibacter</taxon>
    </lineage>
</organism>
<dbReference type="EMBL" id="CP001614">
    <property type="protein sequence ID" value="ACR13666.1"/>
    <property type="molecule type" value="Genomic_DNA"/>
</dbReference>
<dbReference type="RefSeq" id="WP_015819781.1">
    <property type="nucleotide sequence ID" value="NC_012997.1"/>
</dbReference>
<dbReference type="SMR" id="C5BPW1"/>
<dbReference type="STRING" id="377629.TERTU_3219"/>
<dbReference type="KEGG" id="ttu:TERTU_3219"/>
<dbReference type="eggNOG" id="COG0779">
    <property type="taxonomic scope" value="Bacteria"/>
</dbReference>
<dbReference type="HOGENOM" id="CLU_070525_1_1_6"/>
<dbReference type="OrthoDB" id="9805006at2"/>
<dbReference type="Proteomes" id="UP000009080">
    <property type="component" value="Chromosome"/>
</dbReference>
<dbReference type="GO" id="GO:0005829">
    <property type="term" value="C:cytosol"/>
    <property type="evidence" value="ECO:0007669"/>
    <property type="project" value="TreeGrafter"/>
</dbReference>
<dbReference type="GO" id="GO:0000028">
    <property type="term" value="P:ribosomal small subunit assembly"/>
    <property type="evidence" value="ECO:0007669"/>
    <property type="project" value="TreeGrafter"/>
</dbReference>
<dbReference type="GO" id="GO:0006412">
    <property type="term" value="P:translation"/>
    <property type="evidence" value="ECO:0007669"/>
    <property type="project" value="TreeGrafter"/>
</dbReference>
<dbReference type="CDD" id="cd01734">
    <property type="entry name" value="YlxS_C"/>
    <property type="match status" value="1"/>
</dbReference>
<dbReference type="FunFam" id="3.30.300.70:FF:000001">
    <property type="entry name" value="Ribosome maturation factor RimP"/>
    <property type="match status" value="1"/>
</dbReference>
<dbReference type="Gene3D" id="2.30.30.180">
    <property type="entry name" value="Ribosome maturation factor RimP, C-terminal domain"/>
    <property type="match status" value="1"/>
</dbReference>
<dbReference type="Gene3D" id="3.30.300.70">
    <property type="entry name" value="RimP-like superfamily, N-terminal"/>
    <property type="match status" value="1"/>
</dbReference>
<dbReference type="HAMAP" id="MF_01077">
    <property type="entry name" value="RimP"/>
    <property type="match status" value="1"/>
</dbReference>
<dbReference type="InterPro" id="IPR003728">
    <property type="entry name" value="Ribosome_maturation_RimP"/>
</dbReference>
<dbReference type="InterPro" id="IPR028998">
    <property type="entry name" value="RimP_C"/>
</dbReference>
<dbReference type="InterPro" id="IPR036847">
    <property type="entry name" value="RimP_C_sf"/>
</dbReference>
<dbReference type="InterPro" id="IPR028989">
    <property type="entry name" value="RimP_N"/>
</dbReference>
<dbReference type="InterPro" id="IPR035956">
    <property type="entry name" value="RimP_N_sf"/>
</dbReference>
<dbReference type="NCBIfam" id="NF000927">
    <property type="entry name" value="PRK00092.1-1"/>
    <property type="match status" value="1"/>
</dbReference>
<dbReference type="PANTHER" id="PTHR33867">
    <property type="entry name" value="RIBOSOME MATURATION FACTOR RIMP"/>
    <property type="match status" value="1"/>
</dbReference>
<dbReference type="PANTHER" id="PTHR33867:SF1">
    <property type="entry name" value="RIBOSOME MATURATION FACTOR RIMP"/>
    <property type="match status" value="1"/>
</dbReference>
<dbReference type="Pfam" id="PF17384">
    <property type="entry name" value="DUF150_C"/>
    <property type="match status" value="1"/>
</dbReference>
<dbReference type="Pfam" id="PF02576">
    <property type="entry name" value="RimP_N"/>
    <property type="match status" value="1"/>
</dbReference>
<dbReference type="SUPFAM" id="SSF74942">
    <property type="entry name" value="YhbC-like, C-terminal domain"/>
    <property type="match status" value="1"/>
</dbReference>
<dbReference type="SUPFAM" id="SSF75420">
    <property type="entry name" value="YhbC-like, N-terminal domain"/>
    <property type="match status" value="1"/>
</dbReference>
<accession>C5BPW1</accession>
<protein>
    <recommendedName>
        <fullName evidence="1">Ribosome maturation factor RimP</fullName>
    </recommendedName>
</protein>
<comment type="function">
    <text evidence="1">Required for maturation of 30S ribosomal subunits.</text>
</comment>
<comment type="subcellular location">
    <subcellularLocation>
        <location evidence="1">Cytoplasm</location>
    </subcellularLocation>
</comment>
<comment type="similarity">
    <text evidence="1">Belongs to the RimP family.</text>
</comment>